<accession>Q84NQ7</accession>
<accession>A0A0P0XB44</accession>
<name>CSPL4_ORYSJ</name>
<gene>
    <name type="ordered locus">Os07g0692200</name>
    <name type="ordered locus">LOC_Os07g49200</name>
    <name type="ORF">P0034A04.117</name>
</gene>
<protein>
    <recommendedName>
        <fullName>CASP-like protein 4B1</fullName>
        <shortName>OsCASPL4B1</shortName>
    </recommendedName>
</protein>
<feature type="chain" id="PRO_0000391602" description="CASP-like protein 4B1">
    <location>
        <begin position="1"/>
        <end position="199"/>
    </location>
</feature>
<feature type="topological domain" description="Cytoplasmic" evidence="2">
    <location>
        <begin position="1"/>
        <end position="53"/>
    </location>
</feature>
<feature type="transmembrane region" description="Helical" evidence="2">
    <location>
        <begin position="54"/>
        <end position="74"/>
    </location>
</feature>
<feature type="topological domain" description="Extracellular" evidence="2">
    <location>
        <begin position="75"/>
        <end position="91"/>
    </location>
</feature>
<feature type="transmembrane region" description="Helical" evidence="2">
    <location>
        <begin position="92"/>
        <end position="112"/>
    </location>
</feature>
<feature type="topological domain" description="Cytoplasmic" evidence="2">
    <location>
        <begin position="113"/>
        <end position="127"/>
    </location>
</feature>
<feature type="transmembrane region" description="Helical" evidence="2">
    <location>
        <begin position="128"/>
        <end position="148"/>
    </location>
</feature>
<feature type="topological domain" description="Extracellular" evidence="2">
    <location>
        <begin position="149"/>
        <end position="163"/>
    </location>
</feature>
<feature type="transmembrane region" description="Helical" evidence="2">
    <location>
        <begin position="164"/>
        <end position="184"/>
    </location>
</feature>
<feature type="topological domain" description="Cytoplasmic" evidence="2">
    <location>
        <begin position="185"/>
        <end position="199"/>
    </location>
</feature>
<feature type="region of interest" description="Disordered" evidence="3">
    <location>
        <begin position="1"/>
        <end position="32"/>
    </location>
</feature>
<feature type="compositionally biased region" description="Pro residues" evidence="3">
    <location>
        <begin position="14"/>
        <end position="28"/>
    </location>
</feature>
<sequence length="199" mass="20934">MAMVASPDDIVKSPLPPPPPPPPPPLPPAHKDKAAYNPYSGCPAHGGDDGLDGIVLVLRAAAALLALVAMALVASCRHGDWMEFTRYQEYRYLLGVAVVASLYSALQAARTFRRMRAGTAYAATFLDFAGDQAVGYLLITASSAALPITIRMRSAVVNTFTDVVAASISFAFLAFAALAFSALIAGFRLSSSSSSAYNY</sequence>
<evidence type="ECO:0000250" key="1"/>
<evidence type="ECO:0000255" key="2"/>
<evidence type="ECO:0000256" key="3">
    <source>
        <dbReference type="SAM" id="MobiDB-lite"/>
    </source>
</evidence>
<evidence type="ECO:0000305" key="4"/>
<keyword id="KW-1003">Cell membrane</keyword>
<keyword id="KW-0472">Membrane</keyword>
<keyword id="KW-1185">Reference proteome</keyword>
<keyword id="KW-0812">Transmembrane</keyword>
<keyword id="KW-1133">Transmembrane helix</keyword>
<dbReference type="EMBL" id="AP004333">
    <property type="protein sequence ID" value="BAC75558.1"/>
    <property type="molecule type" value="Genomic_DNA"/>
</dbReference>
<dbReference type="EMBL" id="AP008213">
    <property type="protein sequence ID" value="BAF22634.1"/>
    <property type="molecule type" value="Genomic_DNA"/>
</dbReference>
<dbReference type="EMBL" id="AP014963">
    <property type="protein sequence ID" value="BAT03344.1"/>
    <property type="molecule type" value="Genomic_DNA"/>
</dbReference>
<dbReference type="SMR" id="Q84NQ7"/>
<dbReference type="FunCoup" id="Q84NQ7">
    <property type="interactions" value="74"/>
</dbReference>
<dbReference type="PaxDb" id="39947-Q84NQ7"/>
<dbReference type="EnsemblPlants" id="Os07t0692200-00">
    <property type="protein sequence ID" value="Os07t0692200-00"/>
    <property type="gene ID" value="Os07g0692200"/>
</dbReference>
<dbReference type="Gramene" id="Os07t0692200-00">
    <property type="protein sequence ID" value="Os07t0692200-00"/>
    <property type="gene ID" value="Os07g0692200"/>
</dbReference>
<dbReference type="KEGG" id="dosa:Os07g0692200"/>
<dbReference type="eggNOG" id="ENOG502RYC3">
    <property type="taxonomic scope" value="Eukaryota"/>
</dbReference>
<dbReference type="HOGENOM" id="CLU_048961_4_1_1"/>
<dbReference type="InParanoid" id="Q84NQ7"/>
<dbReference type="OMA" id="SKNACTG"/>
<dbReference type="Proteomes" id="UP000000763">
    <property type="component" value="Chromosome 7"/>
</dbReference>
<dbReference type="Proteomes" id="UP000059680">
    <property type="component" value="Chromosome 7"/>
</dbReference>
<dbReference type="GO" id="GO:0005886">
    <property type="term" value="C:plasma membrane"/>
    <property type="evidence" value="ECO:0007669"/>
    <property type="project" value="UniProtKB-SubCell"/>
</dbReference>
<dbReference type="InterPro" id="IPR006702">
    <property type="entry name" value="CASP_dom"/>
</dbReference>
<dbReference type="PANTHER" id="PTHR33573">
    <property type="entry name" value="CASP-LIKE PROTEIN 4A4"/>
    <property type="match status" value="1"/>
</dbReference>
<dbReference type="PANTHER" id="PTHR33573:SF36">
    <property type="entry name" value="CASP-LIKE PROTEIN 4B1"/>
    <property type="match status" value="1"/>
</dbReference>
<dbReference type="Pfam" id="PF04535">
    <property type="entry name" value="CASP_dom"/>
    <property type="match status" value="1"/>
</dbReference>
<dbReference type="SUPFAM" id="SSF101447">
    <property type="entry name" value="Formin homology 2 domain (FH2 domain)"/>
    <property type="match status" value="1"/>
</dbReference>
<proteinExistence type="inferred from homology"/>
<comment type="subunit">
    <text evidence="1">Homodimer and heterodimers.</text>
</comment>
<comment type="subcellular location">
    <subcellularLocation>
        <location evidence="1">Cell membrane</location>
        <topology evidence="1">Multi-pass membrane protein</topology>
    </subcellularLocation>
</comment>
<comment type="similarity">
    <text evidence="4">Belongs to the Casparian strip membrane proteins (CASP) family.</text>
</comment>
<reference key="1">
    <citation type="journal article" date="2005" name="Nature">
        <title>The map-based sequence of the rice genome.</title>
        <authorList>
            <consortium name="International rice genome sequencing project (IRGSP)"/>
        </authorList>
    </citation>
    <scope>NUCLEOTIDE SEQUENCE [LARGE SCALE GENOMIC DNA]</scope>
    <source>
        <strain>cv. Nipponbare</strain>
    </source>
</reference>
<reference key="2">
    <citation type="journal article" date="2008" name="Nucleic Acids Res.">
        <title>The rice annotation project database (RAP-DB): 2008 update.</title>
        <authorList>
            <consortium name="The rice annotation project (RAP)"/>
        </authorList>
    </citation>
    <scope>GENOME REANNOTATION</scope>
    <source>
        <strain>cv. Nipponbare</strain>
    </source>
</reference>
<reference key="3">
    <citation type="journal article" date="2013" name="Rice">
        <title>Improvement of the Oryza sativa Nipponbare reference genome using next generation sequence and optical map data.</title>
        <authorList>
            <person name="Kawahara Y."/>
            <person name="de la Bastide M."/>
            <person name="Hamilton J.P."/>
            <person name="Kanamori H."/>
            <person name="McCombie W.R."/>
            <person name="Ouyang S."/>
            <person name="Schwartz D.C."/>
            <person name="Tanaka T."/>
            <person name="Wu J."/>
            <person name="Zhou S."/>
            <person name="Childs K.L."/>
            <person name="Davidson R.M."/>
            <person name="Lin H."/>
            <person name="Quesada-Ocampo L."/>
            <person name="Vaillancourt B."/>
            <person name="Sakai H."/>
            <person name="Lee S.S."/>
            <person name="Kim J."/>
            <person name="Numa H."/>
            <person name="Itoh T."/>
            <person name="Buell C.R."/>
            <person name="Matsumoto T."/>
        </authorList>
    </citation>
    <scope>GENOME REANNOTATION</scope>
    <source>
        <strain>cv. Nipponbare</strain>
    </source>
</reference>
<reference key="4">
    <citation type="journal article" date="2014" name="Plant Physiol.">
        <title>Functional and evolutionary analysis of the CASPARIAN STRIP MEMBRANE DOMAIN PROTEIN family.</title>
        <authorList>
            <person name="Roppolo D."/>
            <person name="Boeckmann B."/>
            <person name="Pfister A."/>
            <person name="Boutet E."/>
            <person name="Rubio M.C."/>
            <person name="Denervaud-Tendon V."/>
            <person name="Vermeer J.E."/>
            <person name="Gheyselinck J."/>
            <person name="Xenarios I."/>
            <person name="Geldner N."/>
        </authorList>
    </citation>
    <scope>GENE FAMILY</scope>
    <scope>NOMENCLATURE</scope>
</reference>
<organism>
    <name type="scientific">Oryza sativa subsp. japonica</name>
    <name type="common">Rice</name>
    <dbReference type="NCBI Taxonomy" id="39947"/>
    <lineage>
        <taxon>Eukaryota</taxon>
        <taxon>Viridiplantae</taxon>
        <taxon>Streptophyta</taxon>
        <taxon>Embryophyta</taxon>
        <taxon>Tracheophyta</taxon>
        <taxon>Spermatophyta</taxon>
        <taxon>Magnoliopsida</taxon>
        <taxon>Liliopsida</taxon>
        <taxon>Poales</taxon>
        <taxon>Poaceae</taxon>
        <taxon>BOP clade</taxon>
        <taxon>Oryzoideae</taxon>
        <taxon>Oryzeae</taxon>
        <taxon>Oryzinae</taxon>
        <taxon>Oryza</taxon>
        <taxon>Oryza sativa</taxon>
    </lineage>
</organism>